<dbReference type="EC" id="5.4.2.10" evidence="1"/>
<dbReference type="EMBL" id="CP000753">
    <property type="protein sequence ID" value="ABS09412.1"/>
    <property type="molecule type" value="Genomic_DNA"/>
</dbReference>
<dbReference type="RefSeq" id="WP_012089923.1">
    <property type="nucleotide sequence ID" value="NC_009665.1"/>
</dbReference>
<dbReference type="SMR" id="A6WRH3"/>
<dbReference type="KEGG" id="sbm:Shew185_3285"/>
<dbReference type="HOGENOM" id="CLU_016950_7_0_6"/>
<dbReference type="GO" id="GO:0005829">
    <property type="term" value="C:cytosol"/>
    <property type="evidence" value="ECO:0007669"/>
    <property type="project" value="TreeGrafter"/>
</dbReference>
<dbReference type="GO" id="GO:0000287">
    <property type="term" value="F:magnesium ion binding"/>
    <property type="evidence" value="ECO:0007669"/>
    <property type="project" value="UniProtKB-UniRule"/>
</dbReference>
<dbReference type="GO" id="GO:0008966">
    <property type="term" value="F:phosphoglucosamine mutase activity"/>
    <property type="evidence" value="ECO:0007669"/>
    <property type="project" value="UniProtKB-UniRule"/>
</dbReference>
<dbReference type="GO" id="GO:0004615">
    <property type="term" value="F:phosphomannomutase activity"/>
    <property type="evidence" value="ECO:0007669"/>
    <property type="project" value="TreeGrafter"/>
</dbReference>
<dbReference type="GO" id="GO:0005975">
    <property type="term" value="P:carbohydrate metabolic process"/>
    <property type="evidence" value="ECO:0007669"/>
    <property type="project" value="InterPro"/>
</dbReference>
<dbReference type="GO" id="GO:0009252">
    <property type="term" value="P:peptidoglycan biosynthetic process"/>
    <property type="evidence" value="ECO:0007669"/>
    <property type="project" value="TreeGrafter"/>
</dbReference>
<dbReference type="GO" id="GO:0006048">
    <property type="term" value="P:UDP-N-acetylglucosamine biosynthetic process"/>
    <property type="evidence" value="ECO:0007669"/>
    <property type="project" value="TreeGrafter"/>
</dbReference>
<dbReference type="CDD" id="cd05802">
    <property type="entry name" value="GlmM"/>
    <property type="match status" value="1"/>
</dbReference>
<dbReference type="FunFam" id="3.30.310.50:FF:000001">
    <property type="entry name" value="Phosphoglucosamine mutase"/>
    <property type="match status" value="1"/>
</dbReference>
<dbReference type="FunFam" id="3.40.120.10:FF:000001">
    <property type="entry name" value="Phosphoglucosamine mutase"/>
    <property type="match status" value="1"/>
</dbReference>
<dbReference type="FunFam" id="3.40.120.10:FF:000003">
    <property type="entry name" value="Phosphoglucosamine mutase"/>
    <property type="match status" value="1"/>
</dbReference>
<dbReference type="Gene3D" id="3.40.120.10">
    <property type="entry name" value="Alpha-D-Glucose-1,6-Bisphosphate, subunit A, domain 3"/>
    <property type="match status" value="3"/>
</dbReference>
<dbReference type="Gene3D" id="3.30.310.50">
    <property type="entry name" value="Alpha-D-phosphohexomutase, C-terminal domain"/>
    <property type="match status" value="1"/>
</dbReference>
<dbReference type="HAMAP" id="MF_01554_B">
    <property type="entry name" value="GlmM_B"/>
    <property type="match status" value="1"/>
</dbReference>
<dbReference type="InterPro" id="IPR005844">
    <property type="entry name" value="A-D-PHexomutase_a/b/a-I"/>
</dbReference>
<dbReference type="InterPro" id="IPR016055">
    <property type="entry name" value="A-D-PHexomutase_a/b/a-I/II/III"/>
</dbReference>
<dbReference type="InterPro" id="IPR005845">
    <property type="entry name" value="A-D-PHexomutase_a/b/a-II"/>
</dbReference>
<dbReference type="InterPro" id="IPR005846">
    <property type="entry name" value="A-D-PHexomutase_a/b/a-III"/>
</dbReference>
<dbReference type="InterPro" id="IPR005843">
    <property type="entry name" value="A-D-PHexomutase_C"/>
</dbReference>
<dbReference type="InterPro" id="IPR036900">
    <property type="entry name" value="A-D-PHexomutase_C_sf"/>
</dbReference>
<dbReference type="InterPro" id="IPR016066">
    <property type="entry name" value="A-D-PHexomutase_CS"/>
</dbReference>
<dbReference type="InterPro" id="IPR005841">
    <property type="entry name" value="Alpha-D-phosphohexomutase_SF"/>
</dbReference>
<dbReference type="InterPro" id="IPR006352">
    <property type="entry name" value="GlmM_bact"/>
</dbReference>
<dbReference type="InterPro" id="IPR050060">
    <property type="entry name" value="Phosphoglucosamine_mutase"/>
</dbReference>
<dbReference type="NCBIfam" id="TIGR01455">
    <property type="entry name" value="glmM"/>
    <property type="match status" value="1"/>
</dbReference>
<dbReference type="NCBIfam" id="NF008139">
    <property type="entry name" value="PRK10887.1"/>
    <property type="match status" value="1"/>
</dbReference>
<dbReference type="PANTHER" id="PTHR42946:SF1">
    <property type="entry name" value="PHOSPHOGLUCOMUTASE (ALPHA-D-GLUCOSE-1,6-BISPHOSPHATE-DEPENDENT)"/>
    <property type="match status" value="1"/>
</dbReference>
<dbReference type="PANTHER" id="PTHR42946">
    <property type="entry name" value="PHOSPHOHEXOSE MUTASE"/>
    <property type="match status" value="1"/>
</dbReference>
<dbReference type="Pfam" id="PF02878">
    <property type="entry name" value="PGM_PMM_I"/>
    <property type="match status" value="1"/>
</dbReference>
<dbReference type="Pfam" id="PF02879">
    <property type="entry name" value="PGM_PMM_II"/>
    <property type="match status" value="1"/>
</dbReference>
<dbReference type="Pfam" id="PF02880">
    <property type="entry name" value="PGM_PMM_III"/>
    <property type="match status" value="1"/>
</dbReference>
<dbReference type="Pfam" id="PF00408">
    <property type="entry name" value="PGM_PMM_IV"/>
    <property type="match status" value="1"/>
</dbReference>
<dbReference type="PRINTS" id="PR00509">
    <property type="entry name" value="PGMPMM"/>
</dbReference>
<dbReference type="SUPFAM" id="SSF55957">
    <property type="entry name" value="Phosphoglucomutase, C-terminal domain"/>
    <property type="match status" value="1"/>
</dbReference>
<dbReference type="SUPFAM" id="SSF53738">
    <property type="entry name" value="Phosphoglucomutase, first 3 domains"/>
    <property type="match status" value="3"/>
</dbReference>
<dbReference type="PROSITE" id="PS00710">
    <property type="entry name" value="PGM_PMM"/>
    <property type="match status" value="1"/>
</dbReference>
<protein>
    <recommendedName>
        <fullName evidence="1">Phosphoglucosamine mutase 1</fullName>
        <ecNumber evidence="1">5.4.2.10</ecNumber>
    </recommendedName>
</protein>
<gene>
    <name evidence="1" type="primary">glmM1</name>
    <name type="ordered locus">Shew185_3285</name>
</gene>
<name>GLMM1_SHEB8</name>
<evidence type="ECO:0000255" key="1">
    <source>
        <dbReference type="HAMAP-Rule" id="MF_01554"/>
    </source>
</evidence>
<comment type="function">
    <text evidence="1">Catalyzes the conversion of glucosamine-6-phosphate to glucosamine-1-phosphate.</text>
</comment>
<comment type="catalytic activity">
    <reaction evidence="1">
        <text>alpha-D-glucosamine 1-phosphate = D-glucosamine 6-phosphate</text>
        <dbReference type="Rhea" id="RHEA:23424"/>
        <dbReference type="ChEBI" id="CHEBI:58516"/>
        <dbReference type="ChEBI" id="CHEBI:58725"/>
        <dbReference type="EC" id="5.4.2.10"/>
    </reaction>
</comment>
<comment type="cofactor">
    <cofactor evidence="1">
        <name>Mg(2+)</name>
        <dbReference type="ChEBI" id="CHEBI:18420"/>
    </cofactor>
    <text evidence="1">Binds 1 Mg(2+) ion per subunit.</text>
</comment>
<comment type="PTM">
    <text evidence="1">Activated by phosphorylation.</text>
</comment>
<comment type="similarity">
    <text evidence="1">Belongs to the phosphohexose mutase family.</text>
</comment>
<accession>A6WRH3</accession>
<reference key="1">
    <citation type="submission" date="2007-07" db="EMBL/GenBank/DDBJ databases">
        <title>Complete sequence of chromosome of Shewanella baltica OS185.</title>
        <authorList>
            <consortium name="US DOE Joint Genome Institute"/>
            <person name="Copeland A."/>
            <person name="Lucas S."/>
            <person name="Lapidus A."/>
            <person name="Barry K."/>
            <person name="Glavina del Rio T."/>
            <person name="Dalin E."/>
            <person name="Tice H."/>
            <person name="Pitluck S."/>
            <person name="Sims D."/>
            <person name="Brettin T."/>
            <person name="Bruce D."/>
            <person name="Detter J.C."/>
            <person name="Han C."/>
            <person name="Schmutz J."/>
            <person name="Larimer F."/>
            <person name="Land M."/>
            <person name="Hauser L."/>
            <person name="Kyrpides N."/>
            <person name="Mikhailova N."/>
            <person name="Brettar I."/>
            <person name="Rodrigues J."/>
            <person name="Konstantinidis K."/>
            <person name="Tiedje J."/>
            <person name="Richardson P."/>
        </authorList>
    </citation>
    <scope>NUCLEOTIDE SEQUENCE [LARGE SCALE GENOMIC DNA]</scope>
    <source>
        <strain>OS185</strain>
    </source>
</reference>
<organism>
    <name type="scientific">Shewanella baltica (strain OS185)</name>
    <dbReference type="NCBI Taxonomy" id="402882"/>
    <lineage>
        <taxon>Bacteria</taxon>
        <taxon>Pseudomonadati</taxon>
        <taxon>Pseudomonadota</taxon>
        <taxon>Gammaproteobacteria</taxon>
        <taxon>Alteromonadales</taxon>
        <taxon>Shewanellaceae</taxon>
        <taxon>Shewanella</taxon>
    </lineage>
</organism>
<feature type="chain" id="PRO_0000343597" description="Phosphoglucosamine mutase 1">
    <location>
        <begin position="1"/>
        <end position="445"/>
    </location>
</feature>
<feature type="active site" description="Phosphoserine intermediate" evidence="1">
    <location>
        <position position="102"/>
    </location>
</feature>
<feature type="binding site" description="via phosphate group" evidence="1">
    <location>
        <position position="102"/>
    </location>
    <ligand>
        <name>Mg(2+)</name>
        <dbReference type="ChEBI" id="CHEBI:18420"/>
    </ligand>
</feature>
<feature type="binding site" evidence="1">
    <location>
        <position position="241"/>
    </location>
    <ligand>
        <name>Mg(2+)</name>
        <dbReference type="ChEBI" id="CHEBI:18420"/>
    </ligand>
</feature>
<feature type="binding site" evidence="1">
    <location>
        <position position="243"/>
    </location>
    <ligand>
        <name>Mg(2+)</name>
        <dbReference type="ChEBI" id="CHEBI:18420"/>
    </ligand>
</feature>
<feature type="binding site" evidence="1">
    <location>
        <position position="245"/>
    </location>
    <ligand>
        <name>Mg(2+)</name>
        <dbReference type="ChEBI" id="CHEBI:18420"/>
    </ligand>
</feature>
<feature type="modified residue" description="Phosphoserine" evidence="1">
    <location>
        <position position="102"/>
    </location>
</feature>
<proteinExistence type="inferred from homology"/>
<keyword id="KW-0413">Isomerase</keyword>
<keyword id="KW-0460">Magnesium</keyword>
<keyword id="KW-0479">Metal-binding</keyword>
<keyword id="KW-0597">Phosphoprotein</keyword>
<sequence length="445" mass="47698">MKERKFFGTDGIRGKVGSGQMTPELALKLGWAAGRVLSRSGTKKVIIGKDTRISGYMFESALEAGLSAAGLNVMLMGPMPTPAVAYLTRTFRAEAGVVISASHNPYYDNGIKFFSTDGSKLDDNLELEIEAELEKPLVCVESHLLGKVSRIEDARGRYIEYCKGNFPAEHTLTGLKIVVDCAHGATYHIAPAVFRELGAEVIAIGDKPNGMNINDKVGATSMGKICETVLAENADLGIALDGDGDRIMMVNSKGEVIDGDQILYILACDAKSRGVLRGGVVGTLMSNLGLDLALQALDIPFARSKVGDRYVMELLKELDWRIGGENSGHILNLDHGTTGDGIVAGILVLAAMRRQNATLEELTSAMEMLPQVLVNVRFEGEHDPLKSDKVKAAQAQVESELGVRGRVLLRKSGTEPLIRVMVEGDDHSAVLAHANLIADAVKSVS</sequence>